<gene>
    <name type="primary">ssn8</name>
    <name type="ORF">AFUA_2G15790</name>
</gene>
<sequence>MAANYWASTQRRHWLFTREKLAEIREIFREGDKVAHSQFPLPDQRLLNIYFSQQLIKLGKRMSTRQQALATAQVYIKRFYTKNEIRHTNPYLVLTTAFYLACKMEECPQHIRFVVGEARSLWPEFITPDVSKLGECEFSLISEMNSQLIVHHPYRTLSELQPELSLTSDEVALAWSVINDHYLTDLPLLYAPHVIAVMAIIVAVVFKPNSGNFHGSAAPVLAGAMRDGGMNVLAALGDRTGSGPPLKIQKLINWLAESEVDIKGVIECTQELVSLYEVWEQYSEKTCKELLGRMVKAKNLDK</sequence>
<reference key="1">
    <citation type="journal article" date="2005" name="Nature">
        <title>Genomic sequence of the pathogenic and allergenic filamentous fungus Aspergillus fumigatus.</title>
        <authorList>
            <person name="Nierman W.C."/>
            <person name="Pain A."/>
            <person name="Anderson M.J."/>
            <person name="Wortman J.R."/>
            <person name="Kim H.S."/>
            <person name="Arroyo J."/>
            <person name="Berriman M."/>
            <person name="Abe K."/>
            <person name="Archer D.B."/>
            <person name="Bermejo C."/>
            <person name="Bennett J.W."/>
            <person name="Bowyer P."/>
            <person name="Chen D."/>
            <person name="Collins M."/>
            <person name="Coulsen R."/>
            <person name="Davies R."/>
            <person name="Dyer P.S."/>
            <person name="Farman M.L."/>
            <person name="Fedorova N."/>
            <person name="Fedorova N.D."/>
            <person name="Feldblyum T.V."/>
            <person name="Fischer R."/>
            <person name="Fosker N."/>
            <person name="Fraser A."/>
            <person name="Garcia J.L."/>
            <person name="Garcia M.J."/>
            <person name="Goble A."/>
            <person name="Goldman G.H."/>
            <person name="Gomi K."/>
            <person name="Griffith-Jones S."/>
            <person name="Gwilliam R."/>
            <person name="Haas B.J."/>
            <person name="Haas H."/>
            <person name="Harris D.E."/>
            <person name="Horiuchi H."/>
            <person name="Huang J."/>
            <person name="Humphray S."/>
            <person name="Jimenez J."/>
            <person name="Keller N."/>
            <person name="Khouri H."/>
            <person name="Kitamoto K."/>
            <person name="Kobayashi T."/>
            <person name="Konzack S."/>
            <person name="Kulkarni R."/>
            <person name="Kumagai T."/>
            <person name="Lafton A."/>
            <person name="Latge J.-P."/>
            <person name="Li W."/>
            <person name="Lord A."/>
            <person name="Lu C."/>
            <person name="Majoros W.H."/>
            <person name="May G.S."/>
            <person name="Miller B.L."/>
            <person name="Mohamoud Y."/>
            <person name="Molina M."/>
            <person name="Monod M."/>
            <person name="Mouyna I."/>
            <person name="Mulligan S."/>
            <person name="Murphy L.D."/>
            <person name="O'Neil S."/>
            <person name="Paulsen I."/>
            <person name="Penalva M.A."/>
            <person name="Pertea M."/>
            <person name="Price C."/>
            <person name="Pritchard B.L."/>
            <person name="Quail M.A."/>
            <person name="Rabbinowitsch E."/>
            <person name="Rawlins N."/>
            <person name="Rajandream M.A."/>
            <person name="Reichard U."/>
            <person name="Renauld H."/>
            <person name="Robson G.D."/>
            <person name="Rodriguez de Cordoba S."/>
            <person name="Rodriguez-Pena J.M."/>
            <person name="Ronning C.M."/>
            <person name="Rutter S."/>
            <person name="Salzberg S.L."/>
            <person name="Sanchez M."/>
            <person name="Sanchez-Ferrero J.C."/>
            <person name="Saunders D."/>
            <person name="Seeger K."/>
            <person name="Squares R."/>
            <person name="Squares S."/>
            <person name="Takeuchi M."/>
            <person name="Tekaia F."/>
            <person name="Turner G."/>
            <person name="Vazquez de Aldana C.R."/>
            <person name="Weidman J."/>
            <person name="White O."/>
            <person name="Woodward J.R."/>
            <person name="Yu J.-H."/>
            <person name="Fraser C.M."/>
            <person name="Galagan J.E."/>
            <person name="Asai K."/>
            <person name="Machida M."/>
            <person name="Hall N."/>
            <person name="Barrell B.G."/>
            <person name="Denning D.W."/>
        </authorList>
    </citation>
    <scope>NUCLEOTIDE SEQUENCE [LARGE SCALE GENOMIC DNA]</scope>
    <source>
        <strain>ATCC MYA-4609 / CBS 101355 / FGSC A1100 / Af293</strain>
    </source>
</reference>
<accession>Q4WZT9</accession>
<dbReference type="EMBL" id="AAHF01000001">
    <property type="protein sequence ID" value="EAL93876.1"/>
    <property type="molecule type" value="Genomic_DNA"/>
</dbReference>
<dbReference type="RefSeq" id="XP_755914.1">
    <property type="nucleotide sequence ID" value="XM_750821.1"/>
</dbReference>
<dbReference type="SMR" id="Q4WZT9"/>
<dbReference type="FunCoup" id="Q4WZT9">
    <property type="interactions" value="916"/>
</dbReference>
<dbReference type="STRING" id="330879.Q4WZT9"/>
<dbReference type="EnsemblFungi" id="EAL93876">
    <property type="protein sequence ID" value="EAL93876"/>
    <property type="gene ID" value="AFUA_2G15790"/>
</dbReference>
<dbReference type="GeneID" id="3513723"/>
<dbReference type="KEGG" id="afm:AFUA_2G15790"/>
<dbReference type="VEuPathDB" id="FungiDB:Afu2g15790"/>
<dbReference type="eggNOG" id="KOG0794">
    <property type="taxonomic scope" value="Eukaryota"/>
</dbReference>
<dbReference type="HOGENOM" id="CLU_034754_2_0_1"/>
<dbReference type="InParanoid" id="Q4WZT9"/>
<dbReference type="OMA" id="CLLHPPH"/>
<dbReference type="OrthoDB" id="10266018at2759"/>
<dbReference type="Proteomes" id="UP000002530">
    <property type="component" value="Chromosome 2"/>
</dbReference>
<dbReference type="GO" id="GO:0016592">
    <property type="term" value="C:mediator complex"/>
    <property type="evidence" value="ECO:0000318"/>
    <property type="project" value="GO_Central"/>
</dbReference>
<dbReference type="GO" id="GO:0005634">
    <property type="term" value="C:nucleus"/>
    <property type="evidence" value="ECO:0000318"/>
    <property type="project" value="GO_Central"/>
</dbReference>
<dbReference type="GO" id="GO:0016538">
    <property type="term" value="F:cyclin-dependent protein serine/threonine kinase regulator activity"/>
    <property type="evidence" value="ECO:0000318"/>
    <property type="project" value="GO_Central"/>
</dbReference>
<dbReference type="GO" id="GO:0045944">
    <property type="term" value="P:positive regulation of transcription by RNA polymerase II"/>
    <property type="evidence" value="ECO:0000318"/>
    <property type="project" value="GO_Central"/>
</dbReference>
<dbReference type="CDD" id="cd20513">
    <property type="entry name" value="CYCLIN_CCNC_rpt1"/>
    <property type="match status" value="1"/>
</dbReference>
<dbReference type="FunFam" id="1.10.472.10:FF:000092">
    <property type="entry name" value="RNA polymerase II holoenzyme cyclin-like subunit"/>
    <property type="match status" value="1"/>
</dbReference>
<dbReference type="Gene3D" id="1.10.472.10">
    <property type="entry name" value="Cyclin-like"/>
    <property type="match status" value="2"/>
</dbReference>
<dbReference type="InterPro" id="IPR013763">
    <property type="entry name" value="Cyclin-like_dom"/>
</dbReference>
<dbReference type="InterPro" id="IPR036915">
    <property type="entry name" value="Cyclin-like_sf"/>
</dbReference>
<dbReference type="InterPro" id="IPR043198">
    <property type="entry name" value="Cyclin/Ssn8"/>
</dbReference>
<dbReference type="InterPro" id="IPR006671">
    <property type="entry name" value="Cyclin_N"/>
</dbReference>
<dbReference type="PANTHER" id="PTHR10026">
    <property type="entry name" value="CYCLIN"/>
    <property type="match status" value="1"/>
</dbReference>
<dbReference type="Pfam" id="PF00134">
    <property type="entry name" value="Cyclin_N"/>
    <property type="match status" value="1"/>
</dbReference>
<dbReference type="PIRSF" id="PIRSF028758">
    <property type="entry name" value="Cyclin, C/H/G types"/>
    <property type="match status" value="1"/>
</dbReference>
<dbReference type="SMART" id="SM00385">
    <property type="entry name" value="CYCLIN"/>
    <property type="match status" value="1"/>
</dbReference>
<dbReference type="SUPFAM" id="SSF47954">
    <property type="entry name" value="Cyclin-like"/>
    <property type="match status" value="2"/>
</dbReference>
<protein>
    <recommendedName>
        <fullName>RNA polymerase II holoenzyme cyclin-like subunit</fullName>
    </recommendedName>
</protein>
<name>SSN8_ASPFU</name>
<feature type="chain" id="PRO_0000314267" description="RNA polymerase II holoenzyme cyclin-like subunit">
    <location>
        <begin position="1"/>
        <end position="302"/>
    </location>
</feature>
<feature type="domain" description="Cyclin N-terminal">
    <location>
        <begin position="53"/>
        <end position="142"/>
    </location>
</feature>
<proteinExistence type="inferred from homology"/>
<evidence type="ECO:0000250" key="1"/>
<evidence type="ECO:0000305" key="2"/>
<comment type="function">
    <text evidence="1">Component of the srb8-11 complex. The srb8-11 complex is a regulatory module of the Mediator complex which is itself involved in regulation of basal and activated RNA polymerase II-dependent transcription. The srb8-11 complex may be involved in the transcriptional repression of a subset of genes regulated by Mediator. It may inhibit the association of the Mediator complex with RNA polymerase II to form the holoenzyme complex. The srb8-11 complex phosphorylates the C-terminal domain (CTD) of the largest subunit of RNA polymerase II (By similarity).</text>
</comment>
<comment type="subunit">
    <text evidence="1">Component of the srb8-11 complex, a regulatory module of the Mediator complex.</text>
</comment>
<comment type="subcellular location">
    <subcellularLocation>
        <location evidence="2">Nucleus</location>
    </subcellularLocation>
</comment>
<comment type="similarity">
    <text evidence="2">Belongs to the cyclin family. Cyclin C subfamily.</text>
</comment>
<organism>
    <name type="scientific">Aspergillus fumigatus (strain ATCC MYA-4609 / CBS 101355 / FGSC A1100 / Af293)</name>
    <name type="common">Neosartorya fumigata</name>
    <dbReference type="NCBI Taxonomy" id="330879"/>
    <lineage>
        <taxon>Eukaryota</taxon>
        <taxon>Fungi</taxon>
        <taxon>Dikarya</taxon>
        <taxon>Ascomycota</taxon>
        <taxon>Pezizomycotina</taxon>
        <taxon>Eurotiomycetes</taxon>
        <taxon>Eurotiomycetidae</taxon>
        <taxon>Eurotiales</taxon>
        <taxon>Aspergillaceae</taxon>
        <taxon>Aspergillus</taxon>
        <taxon>Aspergillus subgen. Fumigati</taxon>
    </lineage>
</organism>
<keyword id="KW-0010">Activator</keyword>
<keyword id="KW-0195">Cyclin</keyword>
<keyword id="KW-0539">Nucleus</keyword>
<keyword id="KW-1185">Reference proteome</keyword>
<keyword id="KW-0678">Repressor</keyword>
<keyword id="KW-0804">Transcription</keyword>
<keyword id="KW-0805">Transcription regulation</keyword>